<reference key="1">
    <citation type="journal article" date="2003" name="Lancet">
        <title>Genome sequence of Vibrio parahaemolyticus: a pathogenic mechanism distinct from that of V. cholerae.</title>
        <authorList>
            <person name="Makino K."/>
            <person name="Oshima K."/>
            <person name="Kurokawa K."/>
            <person name="Yokoyama K."/>
            <person name="Uda T."/>
            <person name="Tagomori K."/>
            <person name="Iijima Y."/>
            <person name="Najima M."/>
            <person name="Nakano M."/>
            <person name="Yamashita A."/>
            <person name="Kubota Y."/>
            <person name="Kimura S."/>
            <person name="Yasunaga T."/>
            <person name="Honda T."/>
            <person name="Shinagawa H."/>
            <person name="Hattori M."/>
            <person name="Iida T."/>
        </authorList>
    </citation>
    <scope>NUCLEOTIDE SEQUENCE [LARGE SCALE GENOMIC DNA]</scope>
    <source>
        <strain>RIMD 2210633</strain>
    </source>
</reference>
<name>EX7L_VIBPA</name>
<proteinExistence type="inferred from homology"/>
<comment type="function">
    <text evidence="1">Bidirectionally degrades single-stranded DNA into large acid-insoluble oligonucleotides, which are then degraded further into small acid-soluble oligonucleotides.</text>
</comment>
<comment type="catalytic activity">
    <reaction evidence="1">
        <text>Exonucleolytic cleavage in either 5'- to 3'- or 3'- to 5'-direction to yield nucleoside 5'-phosphates.</text>
        <dbReference type="EC" id="3.1.11.6"/>
    </reaction>
</comment>
<comment type="subunit">
    <text evidence="1">Heterooligomer composed of large and small subunits.</text>
</comment>
<comment type="subcellular location">
    <subcellularLocation>
        <location evidence="1">Cytoplasm</location>
    </subcellularLocation>
</comment>
<comment type="similarity">
    <text evidence="1">Belongs to the XseA family.</text>
</comment>
<organism>
    <name type="scientific">Vibrio parahaemolyticus serotype O3:K6 (strain RIMD 2210633)</name>
    <dbReference type="NCBI Taxonomy" id="223926"/>
    <lineage>
        <taxon>Bacteria</taxon>
        <taxon>Pseudomonadati</taxon>
        <taxon>Pseudomonadota</taxon>
        <taxon>Gammaproteobacteria</taxon>
        <taxon>Vibrionales</taxon>
        <taxon>Vibrionaceae</taxon>
        <taxon>Vibrio</taxon>
    </lineage>
</organism>
<feature type="chain" id="PRO_0000197900" description="Exodeoxyribonuclease 7 large subunit">
    <location>
        <begin position="1"/>
        <end position="443"/>
    </location>
</feature>
<sequence length="443" mass="49843">MLSKTNQNIFTVSRLNAEVRLLLENEMGIVWLVGEISNFSAPVSGHWYLTLKDSRAQVKCAMFRGNNRRVTFKPANGNQVLVKARLSLYEPRGDYQLIIESMQPEGDGRLQQEFEELKMKLAAEGLFAQTNKLPLPEHPKRVGIITSKTGAALYDILDVLKRRDPSLPVVIYPTMVQGDDAAIQIAQAIGRANSRNECDVLIVGRGGGSLEDLWCFNNEILARTIAASQIPIISAVGHEVDMTIADFVADVRAPTPSAAAELVSRDNSHKDQSLVAKQHKLASAMRYYLSQQKQQSAQLLHRLERQHPSYQLQRQSQQLDELDMRLRRAMQRFIDTRQQAVERKHHRLQLNSPVKHLAQQKSRLERVEHKLLDTMDRKLLTMRHQLAIAAEKLDTVSPLATLKRGYSITQTEQGKVVTSADDVKTGDLLVTRLANGEIHSTVS</sequence>
<dbReference type="EC" id="3.1.11.6" evidence="1"/>
<dbReference type="EMBL" id="BA000031">
    <property type="protein sequence ID" value="BAC58878.1"/>
    <property type="molecule type" value="Genomic_DNA"/>
</dbReference>
<dbReference type="RefSeq" id="NP_796994.1">
    <property type="nucleotide sequence ID" value="NC_004603.1"/>
</dbReference>
<dbReference type="RefSeq" id="WP_005460216.1">
    <property type="nucleotide sequence ID" value="NC_004603.1"/>
</dbReference>
<dbReference type="SMR" id="Q87S09"/>
<dbReference type="GeneID" id="1188090"/>
<dbReference type="KEGG" id="vpa:VP0615"/>
<dbReference type="PATRIC" id="fig|223926.6.peg.583"/>
<dbReference type="eggNOG" id="COG1570">
    <property type="taxonomic scope" value="Bacteria"/>
</dbReference>
<dbReference type="HOGENOM" id="CLU_023625_3_1_6"/>
<dbReference type="Proteomes" id="UP000002493">
    <property type="component" value="Chromosome 1"/>
</dbReference>
<dbReference type="GO" id="GO:0005737">
    <property type="term" value="C:cytoplasm"/>
    <property type="evidence" value="ECO:0007669"/>
    <property type="project" value="UniProtKB-SubCell"/>
</dbReference>
<dbReference type="GO" id="GO:0009318">
    <property type="term" value="C:exodeoxyribonuclease VII complex"/>
    <property type="evidence" value="ECO:0007669"/>
    <property type="project" value="InterPro"/>
</dbReference>
<dbReference type="GO" id="GO:0008855">
    <property type="term" value="F:exodeoxyribonuclease VII activity"/>
    <property type="evidence" value="ECO:0007669"/>
    <property type="project" value="UniProtKB-UniRule"/>
</dbReference>
<dbReference type="GO" id="GO:0003676">
    <property type="term" value="F:nucleic acid binding"/>
    <property type="evidence" value="ECO:0007669"/>
    <property type="project" value="InterPro"/>
</dbReference>
<dbReference type="GO" id="GO:0006308">
    <property type="term" value="P:DNA catabolic process"/>
    <property type="evidence" value="ECO:0007669"/>
    <property type="project" value="UniProtKB-UniRule"/>
</dbReference>
<dbReference type="CDD" id="cd04489">
    <property type="entry name" value="ExoVII_LU_OBF"/>
    <property type="match status" value="1"/>
</dbReference>
<dbReference type="HAMAP" id="MF_00378">
    <property type="entry name" value="Exonuc_7_L"/>
    <property type="match status" value="1"/>
</dbReference>
<dbReference type="InterPro" id="IPR003753">
    <property type="entry name" value="Exonuc_VII_L"/>
</dbReference>
<dbReference type="InterPro" id="IPR020579">
    <property type="entry name" value="Exonuc_VII_lsu_C"/>
</dbReference>
<dbReference type="InterPro" id="IPR025824">
    <property type="entry name" value="OB-fold_nuc-bd_dom"/>
</dbReference>
<dbReference type="NCBIfam" id="TIGR00237">
    <property type="entry name" value="xseA"/>
    <property type="match status" value="1"/>
</dbReference>
<dbReference type="PANTHER" id="PTHR30008">
    <property type="entry name" value="EXODEOXYRIBONUCLEASE 7 LARGE SUBUNIT"/>
    <property type="match status" value="1"/>
</dbReference>
<dbReference type="PANTHER" id="PTHR30008:SF0">
    <property type="entry name" value="EXODEOXYRIBONUCLEASE 7 LARGE SUBUNIT"/>
    <property type="match status" value="1"/>
</dbReference>
<dbReference type="Pfam" id="PF02601">
    <property type="entry name" value="Exonuc_VII_L"/>
    <property type="match status" value="1"/>
</dbReference>
<dbReference type="Pfam" id="PF13742">
    <property type="entry name" value="tRNA_anti_2"/>
    <property type="match status" value="1"/>
</dbReference>
<keyword id="KW-0963">Cytoplasm</keyword>
<keyword id="KW-0269">Exonuclease</keyword>
<keyword id="KW-0378">Hydrolase</keyword>
<keyword id="KW-0540">Nuclease</keyword>
<gene>
    <name evidence="1" type="primary">xseA</name>
    <name type="ordered locus">VP0615</name>
</gene>
<accession>Q87S09</accession>
<protein>
    <recommendedName>
        <fullName evidence="1">Exodeoxyribonuclease 7 large subunit</fullName>
        <ecNumber evidence="1">3.1.11.6</ecNumber>
    </recommendedName>
    <alternativeName>
        <fullName evidence="1">Exodeoxyribonuclease VII large subunit</fullName>
        <shortName evidence="1">Exonuclease VII large subunit</shortName>
    </alternativeName>
</protein>
<evidence type="ECO:0000255" key="1">
    <source>
        <dbReference type="HAMAP-Rule" id="MF_00378"/>
    </source>
</evidence>